<evidence type="ECO:0000255" key="1">
    <source>
        <dbReference type="HAMAP-Rule" id="MF_00252"/>
    </source>
</evidence>
<sequence length="510" mass="59039">MGEKQLTKEEIKARKMEAKKEAEFNALVKERMQKLENLQEQGKDPFDVYKVERTHTSQQVKDNYDELEGKNVTVAGRLMSKRVHGKAGFSDIRDRYGKIQLYIKINDVGEEKLKEYKTFDIGDFVSITGTVFKTKTGEITLHILDFQLLSKSLKPLPEKFHGLKDPDLRYRQRYVDLIMNEDVKETFMKRTAIIKAIREFLDNRDFLEVETPILSPIAGGAAARPFITHHNALDIDMYLRIATELYLKRLIVGGFEKVYEIGKNFRNEGIDVRHNPEFTAIELYEAYADYNDMMEITENMVAYVCEKVNGTTKVMYEGTEIDFKPPWRRITMVDAVKEYAGVDFNEVKTDEEAREIAKSKELELKKELKDCTKGDILVALFEEFGEEKLMQPTFVCDYPKENSPLTKKKRGNDELTERFEGFVYGREICNAYSELNDPIVQKERFMQQLKERELGDDEAYMMDDDFINALEIGMPPTGGLGIGIDRLIMFLTDSSSIRDVILFPTMKPTK</sequence>
<dbReference type="EC" id="6.1.1.6" evidence="1"/>
<dbReference type="EMBL" id="CP000382">
    <property type="protein sequence ID" value="ABK61738.1"/>
    <property type="molecule type" value="Genomic_DNA"/>
</dbReference>
<dbReference type="SMR" id="A0PXN4"/>
<dbReference type="STRING" id="386415.NT01CX_1046"/>
<dbReference type="KEGG" id="cno:NT01CX_1046"/>
<dbReference type="eggNOG" id="COG1190">
    <property type="taxonomic scope" value="Bacteria"/>
</dbReference>
<dbReference type="HOGENOM" id="CLU_008255_6_0_9"/>
<dbReference type="Proteomes" id="UP000008220">
    <property type="component" value="Chromosome"/>
</dbReference>
<dbReference type="GO" id="GO:0005829">
    <property type="term" value="C:cytosol"/>
    <property type="evidence" value="ECO:0007669"/>
    <property type="project" value="TreeGrafter"/>
</dbReference>
<dbReference type="GO" id="GO:0005524">
    <property type="term" value="F:ATP binding"/>
    <property type="evidence" value="ECO:0007669"/>
    <property type="project" value="UniProtKB-UniRule"/>
</dbReference>
<dbReference type="GO" id="GO:0140096">
    <property type="term" value="F:catalytic activity, acting on a protein"/>
    <property type="evidence" value="ECO:0007669"/>
    <property type="project" value="UniProtKB-ARBA"/>
</dbReference>
<dbReference type="GO" id="GO:0004824">
    <property type="term" value="F:lysine-tRNA ligase activity"/>
    <property type="evidence" value="ECO:0007669"/>
    <property type="project" value="UniProtKB-UniRule"/>
</dbReference>
<dbReference type="GO" id="GO:0000287">
    <property type="term" value="F:magnesium ion binding"/>
    <property type="evidence" value="ECO:0007669"/>
    <property type="project" value="UniProtKB-UniRule"/>
</dbReference>
<dbReference type="GO" id="GO:0016740">
    <property type="term" value="F:transferase activity"/>
    <property type="evidence" value="ECO:0007669"/>
    <property type="project" value="UniProtKB-ARBA"/>
</dbReference>
<dbReference type="GO" id="GO:0000049">
    <property type="term" value="F:tRNA binding"/>
    <property type="evidence" value="ECO:0007669"/>
    <property type="project" value="TreeGrafter"/>
</dbReference>
<dbReference type="GO" id="GO:0006430">
    <property type="term" value="P:lysyl-tRNA aminoacylation"/>
    <property type="evidence" value="ECO:0007669"/>
    <property type="project" value="UniProtKB-UniRule"/>
</dbReference>
<dbReference type="CDD" id="cd00775">
    <property type="entry name" value="LysRS_core"/>
    <property type="match status" value="1"/>
</dbReference>
<dbReference type="CDD" id="cd04322">
    <property type="entry name" value="LysRS_N"/>
    <property type="match status" value="1"/>
</dbReference>
<dbReference type="FunFam" id="2.40.50.140:FF:000024">
    <property type="entry name" value="Lysine--tRNA ligase"/>
    <property type="match status" value="1"/>
</dbReference>
<dbReference type="FunFam" id="3.30.930.10:FF:000001">
    <property type="entry name" value="Lysine--tRNA ligase"/>
    <property type="match status" value="1"/>
</dbReference>
<dbReference type="Gene3D" id="3.30.930.10">
    <property type="entry name" value="Bira Bifunctional Protein, Domain 2"/>
    <property type="match status" value="1"/>
</dbReference>
<dbReference type="Gene3D" id="2.40.50.140">
    <property type="entry name" value="Nucleic acid-binding proteins"/>
    <property type="match status" value="1"/>
</dbReference>
<dbReference type="HAMAP" id="MF_00252">
    <property type="entry name" value="Lys_tRNA_synth_class2"/>
    <property type="match status" value="1"/>
</dbReference>
<dbReference type="InterPro" id="IPR004364">
    <property type="entry name" value="Aa-tRNA-synt_II"/>
</dbReference>
<dbReference type="InterPro" id="IPR006195">
    <property type="entry name" value="aa-tRNA-synth_II"/>
</dbReference>
<dbReference type="InterPro" id="IPR045864">
    <property type="entry name" value="aa-tRNA-synth_II/BPL/LPL"/>
</dbReference>
<dbReference type="InterPro" id="IPR002313">
    <property type="entry name" value="Lys-tRNA-ligase_II"/>
</dbReference>
<dbReference type="InterPro" id="IPR034762">
    <property type="entry name" value="Lys-tRNA-ligase_II_bac/euk"/>
</dbReference>
<dbReference type="InterPro" id="IPR044136">
    <property type="entry name" value="Lys-tRNA-ligase_II_N"/>
</dbReference>
<dbReference type="InterPro" id="IPR018149">
    <property type="entry name" value="Lys-tRNA-synth_II_C"/>
</dbReference>
<dbReference type="InterPro" id="IPR012340">
    <property type="entry name" value="NA-bd_OB-fold"/>
</dbReference>
<dbReference type="InterPro" id="IPR004365">
    <property type="entry name" value="NA-bd_OB_tRNA"/>
</dbReference>
<dbReference type="NCBIfam" id="TIGR00499">
    <property type="entry name" value="lysS_bact"/>
    <property type="match status" value="1"/>
</dbReference>
<dbReference type="NCBIfam" id="NF001756">
    <property type="entry name" value="PRK00484.1"/>
    <property type="match status" value="1"/>
</dbReference>
<dbReference type="PANTHER" id="PTHR42918:SF15">
    <property type="entry name" value="LYSINE--TRNA LIGASE, CHLOROPLASTIC_MITOCHONDRIAL"/>
    <property type="match status" value="1"/>
</dbReference>
<dbReference type="PANTHER" id="PTHR42918">
    <property type="entry name" value="LYSYL-TRNA SYNTHETASE"/>
    <property type="match status" value="1"/>
</dbReference>
<dbReference type="Pfam" id="PF00152">
    <property type="entry name" value="tRNA-synt_2"/>
    <property type="match status" value="1"/>
</dbReference>
<dbReference type="Pfam" id="PF01336">
    <property type="entry name" value="tRNA_anti-codon"/>
    <property type="match status" value="1"/>
</dbReference>
<dbReference type="PIRSF" id="PIRSF039101">
    <property type="entry name" value="LysRS2"/>
    <property type="match status" value="1"/>
</dbReference>
<dbReference type="PRINTS" id="PR00982">
    <property type="entry name" value="TRNASYNTHLYS"/>
</dbReference>
<dbReference type="SUPFAM" id="SSF55681">
    <property type="entry name" value="Class II aaRS and biotin synthetases"/>
    <property type="match status" value="1"/>
</dbReference>
<dbReference type="SUPFAM" id="SSF50249">
    <property type="entry name" value="Nucleic acid-binding proteins"/>
    <property type="match status" value="1"/>
</dbReference>
<dbReference type="PROSITE" id="PS50862">
    <property type="entry name" value="AA_TRNA_LIGASE_II"/>
    <property type="match status" value="1"/>
</dbReference>
<gene>
    <name evidence="1" type="primary">lysS</name>
    <name type="ordered locus">NT01CX_1046</name>
</gene>
<accession>A0PXN4</accession>
<proteinExistence type="inferred from homology"/>
<name>SYK_CLONN</name>
<protein>
    <recommendedName>
        <fullName evidence="1">Lysine--tRNA ligase</fullName>
        <ecNumber evidence="1">6.1.1.6</ecNumber>
    </recommendedName>
    <alternativeName>
        <fullName evidence="1">Lysyl-tRNA synthetase</fullName>
        <shortName evidence="1">LysRS</shortName>
    </alternativeName>
</protein>
<keyword id="KW-0030">Aminoacyl-tRNA synthetase</keyword>
<keyword id="KW-0067">ATP-binding</keyword>
<keyword id="KW-0963">Cytoplasm</keyword>
<keyword id="KW-0436">Ligase</keyword>
<keyword id="KW-0460">Magnesium</keyword>
<keyword id="KW-0479">Metal-binding</keyword>
<keyword id="KW-0547">Nucleotide-binding</keyword>
<keyword id="KW-0648">Protein biosynthesis</keyword>
<keyword id="KW-1185">Reference proteome</keyword>
<comment type="catalytic activity">
    <reaction evidence="1">
        <text>tRNA(Lys) + L-lysine + ATP = L-lysyl-tRNA(Lys) + AMP + diphosphate</text>
        <dbReference type="Rhea" id="RHEA:20792"/>
        <dbReference type="Rhea" id="RHEA-COMP:9696"/>
        <dbReference type="Rhea" id="RHEA-COMP:9697"/>
        <dbReference type="ChEBI" id="CHEBI:30616"/>
        <dbReference type="ChEBI" id="CHEBI:32551"/>
        <dbReference type="ChEBI" id="CHEBI:33019"/>
        <dbReference type="ChEBI" id="CHEBI:78442"/>
        <dbReference type="ChEBI" id="CHEBI:78529"/>
        <dbReference type="ChEBI" id="CHEBI:456215"/>
        <dbReference type="EC" id="6.1.1.6"/>
    </reaction>
</comment>
<comment type="cofactor">
    <cofactor evidence="1">
        <name>Mg(2+)</name>
        <dbReference type="ChEBI" id="CHEBI:18420"/>
    </cofactor>
    <text evidence="1">Binds 3 Mg(2+) ions per subunit.</text>
</comment>
<comment type="subunit">
    <text evidence="1">Homodimer.</text>
</comment>
<comment type="subcellular location">
    <subcellularLocation>
        <location evidence="1">Cytoplasm</location>
    </subcellularLocation>
</comment>
<comment type="similarity">
    <text evidence="1">Belongs to the class-II aminoacyl-tRNA synthetase family.</text>
</comment>
<organism>
    <name type="scientific">Clostridium novyi (strain NT)</name>
    <dbReference type="NCBI Taxonomy" id="386415"/>
    <lineage>
        <taxon>Bacteria</taxon>
        <taxon>Bacillati</taxon>
        <taxon>Bacillota</taxon>
        <taxon>Clostridia</taxon>
        <taxon>Eubacteriales</taxon>
        <taxon>Clostridiaceae</taxon>
        <taxon>Clostridium</taxon>
    </lineage>
</organism>
<feature type="chain" id="PRO_1000204565" description="Lysine--tRNA ligase">
    <location>
        <begin position="1"/>
        <end position="510"/>
    </location>
</feature>
<feature type="binding site" evidence="1">
    <location>
        <position position="420"/>
    </location>
    <ligand>
        <name>Mg(2+)</name>
        <dbReference type="ChEBI" id="CHEBI:18420"/>
        <label>1</label>
    </ligand>
</feature>
<feature type="binding site" evidence="1">
    <location>
        <position position="427"/>
    </location>
    <ligand>
        <name>Mg(2+)</name>
        <dbReference type="ChEBI" id="CHEBI:18420"/>
        <label>1</label>
    </ligand>
</feature>
<feature type="binding site" evidence="1">
    <location>
        <position position="427"/>
    </location>
    <ligand>
        <name>Mg(2+)</name>
        <dbReference type="ChEBI" id="CHEBI:18420"/>
        <label>2</label>
    </ligand>
</feature>
<reference key="1">
    <citation type="journal article" date="2006" name="Nat. Biotechnol.">
        <title>The genome and transcriptomes of the anti-tumor agent Clostridium novyi-NT.</title>
        <authorList>
            <person name="Bettegowda C."/>
            <person name="Huang X."/>
            <person name="Lin J."/>
            <person name="Cheong I."/>
            <person name="Kohli M."/>
            <person name="Szabo S.A."/>
            <person name="Zhang X."/>
            <person name="Diaz L.A. Jr."/>
            <person name="Velculescu V.E."/>
            <person name="Parmigiani G."/>
            <person name="Kinzler K.W."/>
            <person name="Vogelstein B."/>
            <person name="Zhou S."/>
        </authorList>
    </citation>
    <scope>NUCLEOTIDE SEQUENCE [LARGE SCALE GENOMIC DNA]</scope>
    <source>
        <strain>NT</strain>
    </source>
</reference>